<accession>Q3ZZQ6</accession>
<protein>
    <recommendedName>
        <fullName evidence="1">Large ribosomal subunit protein uL30</fullName>
    </recommendedName>
    <alternativeName>
        <fullName evidence="2">50S ribosomal protein L30</fullName>
    </alternativeName>
</protein>
<comment type="subunit">
    <text evidence="1">Part of the 50S ribosomal subunit.</text>
</comment>
<comment type="similarity">
    <text evidence="1">Belongs to the universal ribosomal protein uL30 family.</text>
</comment>
<proteinExistence type="inferred from homology"/>
<feature type="chain" id="PRO_0000347095" description="Large ribosomal subunit protein uL30">
    <location>
        <begin position="1"/>
        <end position="60"/>
    </location>
</feature>
<gene>
    <name evidence="1" type="primary">rpmD</name>
    <name type="ordered locus">cbdbA456</name>
</gene>
<keyword id="KW-0687">Ribonucleoprotein</keyword>
<keyword id="KW-0689">Ribosomal protein</keyword>
<evidence type="ECO:0000255" key="1">
    <source>
        <dbReference type="HAMAP-Rule" id="MF_01371"/>
    </source>
</evidence>
<evidence type="ECO:0000305" key="2"/>
<dbReference type="EMBL" id="AJ965256">
    <property type="protein sequence ID" value="CAI82657.1"/>
    <property type="molecule type" value="Genomic_DNA"/>
</dbReference>
<dbReference type="RefSeq" id="WP_011309012.1">
    <property type="nucleotide sequence ID" value="NC_007356.1"/>
</dbReference>
<dbReference type="SMR" id="Q3ZZQ6"/>
<dbReference type="KEGG" id="deh:cbdbA456"/>
<dbReference type="HOGENOM" id="CLU_131047_2_1_0"/>
<dbReference type="Proteomes" id="UP000000433">
    <property type="component" value="Chromosome"/>
</dbReference>
<dbReference type="GO" id="GO:0022625">
    <property type="term" value="C:cytosolic large ribosomal subunit"/>
    <property type="evidence" value="ECO:0007669"/>
    <property type="project" value="TreeGrafter"/>
</dbReference>
<dbReference type="GO" id="GO:0003735">
    <property type="term" value="F:structural constituent of ribosome"/>
    <property type="evidence" value="ECO:0007669"/>
    <property type="project" value="InterPro"/>
</dbReference>
<dbReference type="GO" id="GO:0006412">
    <property type="term" value="P:translation"/>
    <property type="evidence" value="ECO:0007669"/>
    <property type="project" value="UniProtKB-UniRule"/>
</dbReference>
<dbReference type="CDD" id="cd01658">
    <property type="entry name" value="Ribosomal_L30"/>
    <property type="match status" value="1"/>
</dbReference>
<dbReference type="Gene3D" id="3.30.1390.20">
    <property type="entry name" value="Ribosomal protein L30, ferredoxin-like fold domain"/>
    <property type="match status" value="1"/>
</dbReference>
<dbReference type="HAMAP" id="MF_01371_B">
    <property type="entry name" value="Ribosomal_uL30_B"/>
    <property type="match status" value="1"/>
</dbReference>
<dbReference type="InterPro" id="IPR036919">
    <property type="entry name" value="Ribo_uL30_ferredoxin-like_sf"/>
</dbReference>
<dbReference type="InterPro" id="IPR005996">
    <property type="entry name" value="Ribosomal_uL30_bac-type"/>
</dbReference>
<dbReference type="InterPro" id="IPR016082">
    <property type="entry name" value="Ribosomal_uL30_ferredoxin-like"/>
</dbReference>
<dbReference type="NCBIfam" id="TIGR01308">
    <property type="entry name" value="rpmD_bact"/>
    <property type="match status" value="1"/>
</dbReference>
<dbReference type="PANTHER" id="PTHR15892:SF2">
    <property type="entry name" value="LARGE RIBOSOMAL SUBUNIT PROTEIN UL30M"/>
    <property type="match status" value="1"/>
</dbReference>
<dbReference type="PANTHER" id="PTHR15892">
    <property type="entry name" value="MITOCHONDRIAL RIBOSOMAL PROTEIN L30"/>
    <property type="match status" value="1"/>
</dbReference>
<dbReference type="Pfam" id="PF00327">
    <property type="entry name" value="Ribosomal_L30"/>
    <property type="match status" value="1"/>
</dbReference>
<dbReference type="PIRSF" id="PIRSF002211">
    <property type="entry name" value="Ribosomal_L30_bac-type"/>
    <property type="match status" value="1"/>
</dbReference>
<dbReference type="SUPFAM" id="SSF55129">
    <property type="entry name" value="Ribosomal protein L30p/L7e"/>
    <property type="match status" value="1"/>
</dbReference>
<name>RL30_DEHMC</name>
<organism>
    <name type="scientific">Dehalococcoides mccartyi (strain CBDB1)</name>
    <dbReference type="NCBI Taxonomy" id="255470"/>
    <lineage>
        <taxon>Bacteria</taxon>
        <taxon>Bacillati</taxon>
        <taxon>Chloroflexota</taxon>
        <taxon>Dehalococcoidia</taxon>
        <taxon>Dehalococcoidales</taxon>
        <taxon>Dehalococcoidaceae</taxon>
        <taxon>Dehalococcoides</taxon>
    </lineage>
</organism>
<sequence>MAKIKITWVKSTIGYKFDQAATIKALGFKKLNQSVIQDDSSAIRGMILKVRHLVVLEEVT</sequence>
<reference key="1">
    <citation type="journal article" date="2005" name="Nat. Biotechnol.">
        <title>Genome sequence of the chlorinated compound-respiring bacterium Dehalococcoides species strain CBDB1.</title>
        <authorList>
            <person name="Kube M."/>
            <person name="Beck A."/>
            <person name="Zinder S.H."/>
            <person name="Kuhl H."/>
            <person name="Reinhardt R."/>
            <person name="Adrian L."/>
        </authorList>
    </citation>
    <scope>NUCLEOTIDE SEQUENCE [LARGE SCALE GENOMIC DNA]</scope>
    <source>
        <strain>CBDB1</strain>
    </source>
</reference>